<organism>
    <name type="scientific">Erwinia tasmaniensis (strain DSM 17950 / CFBP 7177 / CIP 109463 / NCPPB 4357 / Et1/99)</name>
    <dbReference type="NCBI Taxonomy" id="465817"/>
    <lineage>
        <taxon>Bacteria</taxon>
        <taxon>Pseudomonadati</taxon>
        <taxon>Pseudomonadota</taxon>
        <taxon>Gammaproteobacteria</taxon>
        <taxon>Enterobacterales</taxon>
        <taxon>Erwiniaceae</taxon>
        <taxon>Erwinia</taxon>
    </lineage>
</organism>
<name>TMAR_ERWT9</name>
<keyword id="KW-0175">Coiled coil</keyword>
<keyword id="KW-0963">Cytoplasm</keyword>
<keyword id="KW-1185">Reference proteome</keyword>
<gene>
    <name evidence="1" type="primary">tmaR</name>
    <name type="ordered locus">ETA_13650</name>
</gene>
<dbReference type="EMBL" id="CU468135">
    <property type="protein sequence ID" value="CAO96411.1"/>
    <property type="molecule type" value="Genomic_DNA"/>
</dbReference>
<dbReference type="RefSeq" id="WP_012441105.1">
    <property type="nucleotide sequence ID" value="NC_010694.1"/>
</dbReference>
<dbReference type="SMR" id="B2VFM6"/>
<dbReference type="STRING" id="465817.ETA_13650"/>
<dbReference type="KEGG" id="eta:ETA_13650"/>
<dbReference type="eggNOG" id="COG2926">
    <property type="taxonomic scope" value="Bacteria"/>
</dbReference>
<dbReference type="HOGENOM" id="CLU_153146_0_0_6"/>
<dbReference type="OrthoDB" id="90485at2"/>
<dbReference type="Proteomes" id="UP000001726">
    <property type="component" value="Chromosome"/>
</dbReference>
<dbReference type="GO" id="GO:0005829">
    <property type="term" value="C:cytosol"/>
    <property type="evidence" value="ECO:0007669"/>
    <property type="project" value="TreeGrafter"/>
</dbReference>
<dbReference type="HAMAP" id="MF_00683">
    <property type="entry name" value="Pole_loc_TmaR"/>
    <property type="match status" value="1"/>
</dbReference>
<dbReference type="InterPro" id="IPR007458">
    <property type="entry name" value="DUF496"/>
</dbReference>
<dbReference type="InterPro" id="IPR053375">
    <property type="entry name" value="UPF0265"/>
</dbReference>
<dbReference type="NCBIfam" id="NF003844">
    <property type="entry name" value="PRK05423.1"/>
    <property type="match status" value="1"/>
</dbReference>
<dbReference type="NCBIfam" id="NF040881">
    <property type="entry name" value="PTS_reg_TmaR"/>
    <property type="match status" value="1"/>
</dbReference>
<dbReference type="PANTHER" id="PTHR39591">
    <property type="entry name" value="UPF0265 PROTEIN YEEX"/>
    <property type="match status" value="1"/>
</dbReference>
<dbReference type="PANTHER" id="PTHR39591:SF1">
    <property type="entry name" value="UPF0265 PROTEIN YEEX"/>
    <property type="match status" value="1"/>
</dbReference>
<dbReference type="Pfam" id="PF04363">
    <property type="entry name" value="DUF496"/>
    <property type="match status" value="1"/>
</dbReference>
<dbReference type="PIRSF" id="PIRSF028773">
    <property type="entry name" value="UCP028773"/>
    <property type="match status" value="1"/>
</dbReference>
<accession>B2VFM6</accession>
<reference key="1">
    <citation type="journal article" date="2008" name="Environ. Microbiol.">
        <title>The genome of Erwinia tasmaniensis strain Et1/99, a non-pathogenic bacterium in the genus Erwinia.</title>
        <authorList>
            <person name="Kube M."/>
            <person name="Migdoll A.M."/>
            <person name="Mueller I."/>
            <person name="Kuhl H."/>
            <person name="Beck A."/>
            <person name="Reinhardt R."/>
            <person name="Geider K."/>
        </authorList>
    </citation>
    <scope>NUCLEOTIDE SEQUENCE [LARGE SCALE GENOMIC DNA]</scope>
    <source>
        <strain>DSM 17950 / CFBP 7177 / CIP 109463 / NCPPB 4357 / Et1/99</strain>
    </source>
</reference>
<sequence>MENAKQSFHDVLEFVRLFRRKNKLQREIHDNEKKIRDNQKRVLLLDNLSEYIKPGMSIEAIQEIIASMRSDYEDRVDEYIIKVADLSKERRDLSKKLKTLGEVKG</sequence>
<comment type="function">
    <text evidence="1">Pole-localizer protein involved in the regulation of several cellular processes.</text>
</comment>
<comment type="subcellular location">
    <subcellularLocation>
        <location evidence="1">Cytoplasm</location>
    </subcellularLocation>
</comment>
<comment type="similarity">
    <text evidence="1">Belongs to the pole-localizer TmaR family.</text>
</comment>
<protein>
    <recommendedName>
        <fullName evidence="1">Pole-localizer protein TmaR</fullName>
    </recommendedName>
</protein>
<feature type="chain" id="PRO_1000131767" description="Pole-localizer protein TmaR">
    <location>
        <begin position="1"/>
        <end position="105"/>
    </location>
</feature>
<feature type="coiled-coil region" evidence="1">
    <location>
        <begin position="21"/>
        <end position="41"/>
    </location>
</feature>
<feature type="coiled-coil region" evidence="1">
    <location>
        <begin position="67"/>
        <end position="102"/>
    </location>
</feature>
<evidence type="ECO:0000255" key="1">
    <source>
        <dbReference type="HAMAP-Rule" id="MF_00683"/>
    </source>
</evidence>
<proteinExistence type="inferred from homology"/>